<name>CD302_RAT</name>
<comment type="function">
    <text evidence="1">Potential multifunctional C-type lectin receptor that may play roles in endocytosis and phagocytosis as well as in cell adhesion and migration.</text>
</comment>
<comment type="subcellular location">
    <subcellularLocation>
        <location evidence="4">Membrane</location>
        <topology evidence="4">Single-pass type I membrane protein</topology>
    </subcellularLocation>
    <subcellularLocation>
        <location evidence="1">Cell projection</location>
        <location evidence="1">Filopodium</location>
    </subcellularLocation>
    <subcellularLocation>
        <location evidence="1">Cytoplasm</location>
        <location evidence="1">Cell cortex</location>
    </subcellularLocation>
    <subcellularLocation>
        <location evidence="1">Cell projection</location>
        <location evidence="1">Microvillus</location>
    </subcellularLocation>
    <text evidence="1">Colocalizes with F-actin in filopodia, cellular cortex and microvilli of the apical cell surface.</text>
</comment>
<gene>
    <name type="primary">Cd302</name>
    <name type="synonym">Clec13a</name>
</gene>
<evidence type="ECO:0000250" key="1"/>
<evidence type="ECO:0000255" key="2"/>
<evidence type="ECO:0000255" key="3">
    <source>
        <dbReference type="PROSITE-ProRule" id="PRU00040"/>
    </source>
</evidence>
<evidence type="ECO:0000305" key="4"/>
<reference key="1">
    <citation type="journal article" date="2004" name="Genome Res.">
        <title>The status, quality, and expansion of the NIH full-length cDNA project: the Mammalian Gene Collection (MGC).</title>
        <authorList>
            <consortium name="The MGC Project Team"/>
        </authorList>
    </citation>
    <scope>NUCLEOTIDE SEQUENCE [LARGE SCALE MRNA]</scope>
    <source>
        <tissue>Liver</tissue>
    </source>
</reference>
<accession>Q5FVR3</accession>
<feature type="signal peptide" evidence="2">
    <location>
        <begin position="1"/>
        <end position="20"/>
    </location>
</feature>
<feature type="chain" id="PRO_0000252334" description="CD302 antigen">
    <location>
        <begin position="21"/>
        <end position="228"/>
    </location>
</feature>
<feature type="topological domain" description="Extracellular" evidence="2">
    <location>
        <begin position="21"/>
        <end position="165"/>
    </location>
</feature>
<feature type="transmembrane region" description="Helical" evidence="2">
    <location>
        <begin position="166"/>
        <end position="186"/>
    </location>
</feature>
<feature type="topological domain" description="Cytoplasmic" evidence="2">
    <location>
        <begin position="187"/>
        <end position="228"/>
    </location>
</feature>
<feature type="domain" description="C-type lectin" evidence="3">
    <location>
        <begin position="30"/>
        <end position="149"/>
    </location>
</feature>
<feature type="glycosylation site" description="N-linked (GlcNAc...) asparagine" evidence="2">
    <location>
        <position position="107"/>
    </location>
</feature>
<feature type="disulfide bond" evidence="3">
    <location>
        <begin position="125"/>
        <end position="140"/>
    </location>
</feature>
<keyword id="KW-0966">Cell projection</keyword>
<keyword id="KW-0963">Cytoplasm</keyword>
<keyword id="KW-1015">Disulfide bond</keyword>
<keyword id="KW-0325">Glycoprotein</keyword>
<keyword id="KW-0430">Lectin</keyword>
<keyword id="KW-0472">Membrane</keyword>
<keyword id="KW-0675">Receptor</keyword>
<keyword id="KW-1185">Reference proteome</keyword>
<keyword id="KW-0732">Signal</keyword>
<keyword id="KW-0812">Transmembrane</keyword>
<keyword id="KW-1133">Transmembrane helix</keyword>
<sequence>MPHAALSSLVLLSLATAIFADCPSSIWVQFQGSCYTFLQVTINVENIEDVRKQCTDHGADLVSIHNEEENAFILDTLQKRWKGPDDLLLGMFYDTDDASFKWFDQSNMTFDKWADEDGEDLVDTCGFLYAKTGEWRKGNCEMSSVTGTLCKTAIPYDKKYLSDNHILISTLVIASTVTLAVLGAVIWFLYRRSARSGFTSFSPAPQSPYSDGCALVVSEEDEYSVQLD</sequence>
<proteinExistence type="evidence at transcript level"/>
<organism>
    <name type="scientific">Rattus norvegicus</name>
    <name type="common">Rat</name>
    <dbReference type="NCBI Taxonomy" id="10116"/>
    <lineage>
        <taxon>Eukaryota</taxon>
        <taxon>Metazoa</taxon>
        <taxon>Chordata</taxon>
        <taxon>Craniata</taxon>
        <taxon>Vertebrata</taxon>
        <taxon>Euteleostomi</taxon>
        <taxon>Mammalia</taxon>
        <taxon>Eutheria</taxon>
        <taxon>Euarchontoglires</taxon>
        <taxon>Glires</taxon>
        <taxon>Rodentia</taxon>
        <taxon>Myomorpha</taxon>
        <taxon>Muroidea</taxon>
        <taxon>Muridae</taxon>
        <taxon>Murinae</taxon>
        <taxon>Rattus</taxon>
    </lineage>
</organism>
<dbReference type="EMBL" id="BC089829">
    <property type="protein sequence ID" value="AAH89829.1"/>
    <property type="molecule type" value="mRNA"/>
</dbReference>
<dbReference type="RefSeq" id="NP_001013938.1">
    <property type="nucleotide sequence ID" value="NM_001013916.1"/>
</dbReference>
<dbReference type="SMR" id="Q5FVR3"/>
<dbReference type="FunCoup" id="Q5FVR3">
    <property type="interactions" value="200"/>
</dbReference>
<dbReference type="STRING" id="10116.ENSRNOP00000008987"/>
<dbReference type="GlyCosmos" id="Q5FVR3">
    <property type="glycosylation" value="1 site, No reported glycans"/>
</dbReference>
<dbReference type="GlyGen" id="Q5FVR3">
    <property type="glycosylation" value="1 site"/>
</dbReference>
<dbReference type="PhosphoSitePlus" id="Q5FVR3"/>
<dbReference type="PaxDb" id="10116-ENSRNOP00000008987"/>
<dbReference type="Ensembl" id="ENSRNOT00000008987.6">
    <property type="protein sequence ID" value="ENSRNOP00000008987.6"/>
    <property type="gene ID" value="ENSRNOG00000006623.7"/>
</dbReference>
<dbReference type="GeneID" id="295629"/>
<dbReference type="KEGG" id="rno:295629"/>
<dbReference type="UCSC" id="RGD:1307606">
    <property type="organism name" value="rat"/>
</dbReference>
<dbReference type="AGR" id="RGD:1307606"/>
<dbReference type="CTD" id="9936"/>
<dbReference type="RGD" id="1307606">
    <property type="gene designation" value="Cd302"/>
</dbReference>
<dbReference type="eggNOG" id="KOG4297">
    <property type="taxonomic scope" value="Eukaryota"/>
</dbReference>
<dbReference type="GeneTree" id="ENSGT01050000244842"/>
<dbReference type="InParanoid" id="Q5FVR3"/>
<dbReference type="OrthoDB" id="29640at9989"/>
<dbReference type="PhylomeDB" id="Q5FVR3"/>
<dbReference type="PRO" id="PR:Q5FVR3"/>
<dbReference type="Proteomes" id="UP000002494">
    <property type="component" value="Chromosome 3"/>
</dbReference>
<dbReference type="GO" id="GO:0005938">
    <property type="term" value="C:cell cortex"/>
    <property type="evidence" value="ECO:0000266"/>
    <property type="project" value="RGD"/>
</dbReference>
<dbReference type="GO" id="GO:0030175">
    <property type="term" value="C:filopodium"/>
    <property type="evidence" value="ECO:0000266"/>
    <property type="project" value="RGD"/>
</dbReference>
<dbReference type="GO" id="GO:0016020">
    <property type="term" value="C:membrane"/>
    <property type="evidence" value="ECO:0007669"/>
    <property type="project" value="UniProtKB-SubCell"/>
</dbReference>
<dbReference type="GO" id="GO:0005902">
    <property type="term" value="C:microvillus"/>
    <property type="evidence" value="ECO:0007669"/>
    <property type="project" value="UniProtKB-SubCell"/>
</dbReference>
<dbReference type="GO" id="GO:0030246">
    <property type="term" value="F:carbohydrate binding"/>
    <property type="evidence" value="ECO:0007669"/>
    <property type="project" value="UniProtKB-KW"/>
</dbReference>
<dbReference type="GO" id="GO:0038023">
    <property type="term" value="F:signaling receptor activity"/>
    <property type="evidence" value="ECO:0000318"/>
    <property type="project" value="GO_Central"/>
</dbReference>
<dbReference type="GO" id="GO:0006909">
    <property type="term" value="P:phagocytosis"/>
    <property type="evidence" value="ECO:0000266"/>
    <property type="project" value="RGD"/>
</dbReference>
<dbReference type="CDD" id="cd00037">
    <property type="entry name" value="CLECT"/>
    <property type="match status" value="1"/>
</dbReference>
<dbReference type="FunFam" id="3.10.100.10:FF:000082">
    <property type="entry name" value="CD302 antigen isoform X2"/>
    <property type="match status" value="1"/>
</dbReference>
<dbReference type="Gene3D" id="3.10.100.10">
    <property type="entry name" value="Mannose-Binding Protein A, subunit A"/>
    <property type="match status" value="1"/>
</dbReference>
<dbReference type="InterPro" id="IPR001304">
    <property type="entry name" value="C-type_lectin-like"/>
</dbReference>
<dbReference type="InterPro" id="IPR016186">
    <property type="entry name" value="C-type_lectin-like/link_sf"/>
</dbReference>
<dbReference type="InterPro" id="IPR050111">
    <property type="entry name" value="C-type_lectin/snaclec_domain"/>
</dbReference>
<dbReference type="InterPro" id="IPR016187">
    <property type="entry name" value="CTDL_fold"/>
</dbReference>
<dbReference type="PANTHER" id="PTHR22803">
    <property type="entry name" value="MANNOSE, PHOSPHOLIPASE, LECTIN RECEPTOR RELATED"/>
    <property type="match status" value="1"/>
</dbReference>
<dbReference type="Pfam" id="PF00059">
    <property type="entry name" value="Lectin_C"/>
    <property type="match status" value="1"/>
</dbReference>
<dbReference type="SMART" id="SM00034">
    <property type="entry name" value="CLECT"/>
    <property type="match status" value="1"/>
</dbReference>
<dbReference type="SUPFAM" id="SSF56436">
    <property type="entry name" value="C-type lectin-like"/>
    <property type="match status" value="1"/>
</dbReference>
<dbReference type="PROSITE" id="PS50041">
    <property type="entry name" value="C_TYPE_LECTIN_2"/>
    <property type="match status" value="1"/>
</dbReference>
<protein>
    <recommendedName>
        <fullName>CD302 antigen</fullName>
    </recommendedName>
    <alternativeName>
        <fullName>C-type lectin domain family 13 member A</fullName>
    </alternativeName>
    <cdAntigenName>CD302</cdAntigenName>
</protein>